<reference key="1">
    <citation type="journal article" date="1990" name="Nucleic Acids Res.">
        <title>Nucleotide sequence of the erythromycin resistance gene of the conjugative transposon Tn1545.</title>
        <authorList>
            <person name="Trieu-Cuot P."/>
            <person name="Poyart-Salmeron C."/>
            <person name="Carlier C."/>
            <person name="Courvalin P."/>
        </authorList>
    </citation>
    <scope>NUCLEOTIDE SEQUENCE [GENOMIC DNA]</scope>
    <source>
        <transposon>Tn1545</transposon>
    </source>
</reference>
<reference key="2">
    <citation type="journal article" date="1997" name="Nat. Struct. Biol.">
        <title>Solution structure of an rRNA methyltransferase (ErmAM) that confers macrolide-lincosamide-streptogramin antibiotic resistance.</title>
        <authorList>
            <person name="Yu L."/>
            <person name="Petros A.M."/>
            <person name="Schnuchel A."/>
            <person name="Zhong P."/>
            <person name="Severin J.M."/>
            <person name="Walter K."/>
            <person name="Holzman T.F."/>
            <person name="Fesik S.W."/>
        </authorList>
    </citation>
    <scope>STRUCTURE BY NMR</scope>
</reference>
<reference key="3">
    <citation type="journal article" date="1997" name="Nat. Struct. Biol.">
        <authorList>
            <person name="Yu L."/>
            <person name="Petros A.M."/>
            <person name="Schnuchel A."/>
            <person name="Zhong P."/>
            <person name="Severin J.M."/>
            <person name="Walter K."/>
            <person name="Holzman T.F."/>
            <person name="Fesik S.W."/>
        </authorList>
    </citation>
    <scope>ERRATUM OF PUBMED:9187657</scope>
</reference>
<name>ERM_STREE</name>
<comment type="function">
    <text>This protein produces a dimethylation of the adenine residue at position 2085 in 23S rRNA, resulting in reduced affinity between ribosomes and macrolide-lincosamide-streptogramin B antibiotics.</text>
</comment>
<comment type="catalytic activity">
    <reaction>
        <text>adenosine(2085) in 23S rRNA + 2 S-adenosyl-L-methionine = N(6)-dimethyladenosine(2085) in 23S rRNA + 2 S-adenosyl-L-homocysteine + 2 H(+)</text>
        <dbReference type="Rhea" id="RHEA:42784"/>
        <dbReference type="Rhea" id="RHEA-COMP:10237"/>
        <dbReference type="Rhea" id="RHEA-COMP:10238"/>
        <dbReference type="ChEBI" id="CHEBI:15378"/>
        <dbReference type="ChEBI" id="CHEBI:57856"/>
        <dbReference type="ChEBI" id="CHEBI:59789"/>
        <dbReference type="ChEBI" id="CHEBI:74411"/>
        <dbReference type="ChEBI" id="CHEBI:74493"/>
        <dbReference type="EC" id="2.1.1.184"/>
    </reaction>
</comment>
<comment type="similarity">
    <text evidence="1">Belongs to the class I-like SAM-binding methyltransferase superfamily. rRNA adenine N(6)-methyltransferase family.</text>
</comment>
<accession>P21236</accession>
<sequence>MNKNIKYSQNFLTSEKVLNQIIKQLNLKETDTVYEIGTGKGHLTTKLAKISKQVTSIELDSHLFNLSSEKLKLNIRVTLIHQDILQFQFPNKQRYKIVGSIPYHLSTQIIKKVVFESHASDIYLIVEEGFYKRTLDIHRTLGLLLHTQVSIQQLLKLPAECFHPKPKVNSVLIKLTRHTTDVPDKYWKLYTYFVSKWVNREYRQLFTKNQFHQAMKHAKVNNLSTITYEQVLSIFNSYLLFNGRK</sequence>
<feature type="chain" id="PRO_0000101690" description="rRNA adenine N-6-methyltransferase">
    <location>
        <begin position="1"/>
        <end position="245"/>
    </location>
</feature>
<feature type="binding site" evidence="1">
    <location>
        <position position="10"/>
    </location>
    <ligand>
        <name>S-adenosyl-L-methionine</name>
        <dbReference type="ChEBI" id="CHEBI:59789"/>
    </ligand>
</feature>
<feature type="binding site" evidence="1">
    <location>
        <position position="12"/>
    </location>
    <ligand>
        <name>S-adenosyl-L-methionine</name>
        <dbReference type="ChEBI" id="CHEBI:59789"/>
    </ligand>
</feature>
<feature type="binding site" evidence="1">
    <location>
        <position position="37"/>
    </location>
    <ligand>
        <name>S-adenosyl-L-methionine</name>
        <dbReference type="ChEBI" id="CHEBI:59789"/>
    </ligand>
</feature>
<feature type="binding site" evidence="1">
    <location>
        <position position="58"/>
    </location>
    <ligand>
        <name>S-adenosyl-L-methionine</name>
        <dbReference type="ChEBI" id="CHEBI:59789"/>
    </ligand>
</feature>
<feature type="binding site" evidence="1">
    <location>
        <position position="83"/>
    </location>
    <ligand>
        <name>S-adenosyl-L-methionine</name>
        <dbReference type="ChEBI" id="CHEBI:59789"/>
    </ligand>
</feature>
<feature type="binding site" evidence="1">
    <location>
        <position position="100"/>
    </location>
    <ligand>
        <name>S-adenosyl-L-methionine</name>
        <dbReference type="ChEBI" id="CHEBI:59789"/>
    </ligand>
</feature>
<feature type="turn" evidence="2">
    <location>
        <begin position="15"/>
        <end position="17"/>
    </location>
</feature>
<feature type="helix" evidence="2">
    <location>
        <begin position="18"/>
        <end position="24"/>
    </location>
</feature>
<feature type="strand" evidence="2">
    <location>
        <begin position="29"/>
        <end position="35"/>
    </location>
</feature>
<feature type="helix" evidence="2">
    <location>
        <begin position="45"/>
        <end position="50"/>
    </location>
</feature>
<feature type="strand" evidence="2">
    <location>
        <begin position="51"/>
        <end position="60"/>
    </location>
</feature>
<feature type="strand" evidence="2">
    <location>
        <begin position="62"/>
        <end position="68"/>
    </location>
</feature>
<feature type="turn" evidence="2">
    <location>
        <begin position="70"/>
        <end position="73"/>
    </location>
</feature>
<feature type="strand" evidence="2">
    <location>
        <begin position="75"/>
        <end position="79"/>
    </location>
</feature>
<feature type="turn" evidence="2">
    <location>
        <begin position="85"/>
        <end position="88"/>
    </location>
</feature>
<feature type="strand" evidence="2">
    <location>
        <begin position="92"/>
        <end position="100"/>
    </location>
</feature>
<feature type="strand" evidence="2">
    <location>
        <begin position="103"/>
        <end position="105"/>
    </location>
</feature>
<feature type="helix" evidence="2">
    <location>
        <begin position="107"/>
        <end position="116"/>
    </location>
</feature>
<feature type="strand" evidence="2">
    <location>
        <begin position="120"/>
        <end position="129"/>
    </location>
</feature>
<feature type="helix" evidence="2">
    <location>
        <begin position="130"/>
        <end position="135"/>
    </location>
</feature>
<feature type="helix" evidence="2">
    <location>
        <begin position="137"/>
        <end position="139"/>
    </location>
</feature>
<feature type="helix" evidence="2">
    <location>
        <begin position="141"/>
        <end position="144"/>
    </location>
</feature>
<feature type="turn" evidence="2">
    <location>
        <begin position="145"/>
        <end position="148"/>
    </location>
</feature>
<feature type="strand" evidence="2">
    <location>
        <begin position="153"/>
        <end position="157"/>
    </location>
</feature>
<feature type="strand" evidence="2">
    <location>
        <begin position="162"/>
        <end position="165"/>
    </location>
</feature>
<feature type="strand" evidence="2">
    <location>
        <begin position="170"/>
        <end position="175"/>
    </location>
</feature>
<feature type="helix" evidence="2">
    <location>
        <begin position="184"/>
        <end position="199"/>
    </location>
</feature>
<feature type="helix" evidence="2">
    <location>
        <begin position="202"/>
        <end position="205"/>
    </location>
</feature>
<feature type="strand" evidence="2">
    <location>
        <begin position="207"/>
        <end position="209"/>
    </location>
</feature>
<feature type="helix" evidence="2">
    <location>
        <begin position="210"/>
        <end position="217"/>
    </location>
</feature>
<feature type="helix" evidence="2">
    <location>
        <begin position="229"/>
        <end position="241"/>
    </location>
</feature>
<dbReference type="EC" id="2.1.1.184"/>
<dbReference type="EMBL" id="X52632">
    <property type="status" value="NOT_ANNOTATED_CDS"/>
    <property type="molecule type" value="Genomic_DNA"/>
</dbReference>
<dbReference type="PIR" id="S12727">
    <property type="entry name" value="S12727"/>
</dbReference>
<dbReference type="PDB" id="1YUB">
    <property type="method" value="NMR"/>
    <property type="chains" value="A=1-245"/>
</dbReference>
<dbReference type="PDBsum" id="1YUB"/>
<dbReference type="SMR" id="P21236"/>
<dbReference type="BindingDB" id="P21236"/>
<dbReference type="ChEMBL" id="CHEMBL2757"/>
<dbReference type="EvolutionaryTrace" id="P21236"/>
<dbReference type="GO" id="GO:0005829">
    <property type="term" value="C:cytosol"/>
    <property type="evidence" value="ECO:0007669"/>
    <property type="project" value="TreeGrafter"/>
</dbReference>
<dbReference type="GO" id="GO:0052910">
    <property type="term" value="F:23S rRNA (adenine(2085)-N(6))-dimethyltransferase activity"/>
    <property type="evidence" value="ECO:0007669"/>
    <property type="project" value="UniProtKB-EC"/>
</dbReference>
<dbReference type="GO" id="GO:0003723">
    <property type="term" value="F:RNA binding"/>
    <property type="evidence" value="ECO:0007669"/>
    <property type="project" value="UniProtKB-KW"/>
</dbReference>
<dbReference type="GO" id="GO:0000179">
    <property type="term" value="F:rRNA (adenine-N6,N6-)-dimethyltransferase activity"/>
    <property type="evidence" value="ECO:0007669"/>
    <property type="project" value="InterPro"/>
</dbReference>
<dbReference type="GO" id="GO:0046677">
    <property type="term" value="P:response to antibiotic"/>
    <property type="evidence" value="ECO:0007669"/>
    <property type="project" value="UniProtKB-KW"/>
</dbReference>
<dbReference type="CDD" id="cd02440">
    <property type="entry name" value="AdoMet_MTases"/>
    <property type="match status" value="1"/>
</dbReference>
<dbReference type="Gene3D" id="1.10.8.100">
    <property type="entry name" value="Ribosomal RNA adenine dimethylase-like, domain 2"/>
    <property type="match status" value="1"/>
</dbReference>
<dbReference type="Gene3D" id="3.40.50.150">
    <property type="entry name" value="Vaccinia Virus protein VP39"/>
    <property type="match status" value="1"/>
</dbReference>
<dbReference type="InterPro" id="IPR001737">
    <property type="entry name" value="KsgA/Erm"/>
</dbReference>
<dbReference type="InterPro" id="IPR023165">
    <property type="entry name" value="rRNA_Ade_diMease-like_C"/>
</dbReference>
<dbReference type="InterPro" id="IPR020596">
    <property type="entry name" value="rRNA_Ade_Mease_Trfase_CS"/>
</dbReference>
<dbReference type="InterPro" id="IPR020598">
    <property type="entry name" value="rRNA_Ade_methylase_Trfase_N"/>
</dbReference>
<dbReference type="InterPro" id="IPR029063">
    <property type="entry name" value="SAM-dependent_MTases_sf"/>
</dbReference>
<dbReference type="NCBIfam" id="NF000499">
    <property type="entry name" value="Erm23S_rRNA_broad"/>
    <property type="match status" value="1"/>
</dbReference>
<dbReference type="NCBIfam" id="NF012220">
    <property type="entry name" value="erm_B_23S_MT"/>
    <property type="match status" value="1"/>
</dbReference>
<dbReference type="PANTHER" id="PTHR11727">
    <property type="entry name" value="DIMETHYLADENOSINE TRANSFERASE"/>
    <property type="match status" value="1"/>
</dbReference>
<dbReference type="PANTHER" id="PTHR11727:SF7">
    <property type="entry name" value="DIMETHYLADENOSINE TRANSFERASE-RELATED"/>
    <property type="match status" value="1"/>
</dbReference>
<dbReference type="Pfam" id="PF00398">
    <property type="entry name" value="RrnaAD"/>
    <property type="match status" value="1"/>
</dbReference>
<dbReference type="SMART" id="SM00650">
    <property type="entry name" value="rADc"/>
    <property type="match status" value="1"/>
</dbReference>
<dbReference type="SUPFAM" id="SSF53335">
    <property type="entry name" value="S-adenosyl-L-methionine-dependent methyltransferases"/>
    <property type="match status" value="1"/>
</dbReference>
<dbReference type="PROSITE" id="PS01131">
    <property type="entry name" value="RRNA_A_DIMETH"/>
    <property type="match status" value="1"/>
</dbReference>
<dbReference type="PROSITE" id="PS51689">
    <property type="entry name" value="SAM_RNA_A_N6_MT"/>
    <property type="match status" value="1"/>
</dbReference>
<evidence type="ECO:0000255" key="1">
    <source>
        <dbReference type="PROSITE-ProRule" id="PRU01026"/>
    </source>
</evidence>
<evidence type="ECO:0007829" key="2">
    <source>
        <dbReference type="PDB" id="1YUB"/>
    </source>
</evidence>
<proteinExistence type="evidence at protein level"/>
<keyword id="KW-0002">3D-structure</keyword>
<keyword id="KW-0046">Antibiotic resistance</keyword>
<keyword id="KW-0489">Methyltransferase</keyword>
<keyword id="KW-0694">RNA-binding</keyword>
<keyword id="KW-0949">S-adenosyl-L-methionine</keyword>
<keyword id="KW-0808">Transferase</keyword>
<keyword id="KW-0814">Transposable element</keyword>
<gene>
    <name type="primary">erm</name>
</gene>
<organism>
    <name type="scientific">Streptococcus pneumoniae</name>
    <dbReference type="NCBI Taxonomy" id="1313"/>
    <lineage>
        <taxon>Bacteria</taxon>
        <taxon>Bacillati</taxon>
        <taxon>Bacillota</taxon>
        <taxon>Bacilli</taxon>
        <taxon>Lactobacillales</taxon>
        <taxon>Streptococcaceae</taxon>
        <taxon>Streptococcus</taxon>
    </lineage>
</organism>
<protein>
    <recommendedName>
        <fullName>rRNA adenine N-6-methyltransferase</fullName>
        <ecNumber>2.1.1.184</ecNumber>
    </recommendedName>
    <alternativeName>
        <fullName>ErmAM</fullName>
    </alternativeName>
    <alternativeName>
        <fullName>Macrolide-lincosamide-streptogramin B resistance protein</fullName>
    </alternativeName>
</protein>